<feature type="chain" id="PRO_0000139461" description="UPF0235 protein VP2619">
    <location>
        <begin position="1"/>
        <end position="96"/>
    </location>
</feature>
<evidence type="ECO:0000255" key="1">
    <source>
        <dbReference type="HAMAP-Rule" id="MF_00634"/>
    </source>
</evidence>
<name>Y2619_VIBPA</name>
<accession>Q87LJ3</accession>
<proteinExistence type="inferred from homology"/>
<gene>
    <name type="ordered locus">VP2619</name>
</gene>
<reference key="1">
    <citation type="journal article" date="2003" name="Lancet">
        <title>Genome sequence of Vibrio parahaemolyticus: a pathogenic mechanism distinct from that of V. cholerae.</title>
        <authorList>
            <person name="Makino K."/>
            <person name="Oshima K."/>
            <person name="Kurokawa K."/>
            <person name="Yokoyama K."/>
            <person name="Uda T."/>
            <person name="Tagomori K."/>
            <person name="Iijima Y."/>
            <person name="Najima M."/>
            <person name="Nakano M."/>
            <person name="Yamashita A."/>
            <person name="Kubota Y."/>
            <person name="Kimura S."/>
            <person name="Yasunaga T."/>
            <person name="Honda T."/>
            <person name="Shinagawa H."/>
            <person name="Hattori M."/>
            <person name="Iida T."/>
        </authorList>
    </citation>
    <scope>NUCLEOTIDE SEQUENCE [LARGE SCALE GENOMIC DNA]</scope>
    <source>
        <strain>RIMD 2210633</strain>
    </source>
</reference>
<organism>
    <name type="scientific">Vibrio parahaemolyticus serotype O3:K6 (strain RIMD 2210633)</name>
    <dbReference type="NCBI Taxonomy" id="223926"/>
    <lineage>
        <taxon>Bacteria</taxon>
        <taxon>Pseudomonadati</taxon>
        <taxon>Pseudomonadota</taxon>
        <taxon>Gammaproteobacteria</taxon>
        <taxon>Vibrionales</taxon>
        <taxon>Vibrionaceae</taxon>
        <taxon>Vibrio</taxon>
    </lineage>
</organism>
<comment type="similarity">
    <text evidence="1">Belongs to the UPF0235 family.</text>
</comment>
<dbReference type="EMBL" id="BA000031">
    <property type="protein sequence ID" value="BAC60882.1"/>
    <property type="molecule type" value="Genomic_DNA"/>
</dbReference>
<dbReference type="RefSeq" id="NP_798998.1">
    <property type="nucleotide sequence ID" value="NC_004603.1"/>
</dbReference>
<dbReference type="SMR" id="Q87LJ3"/>
<dbReference type="GeneID" id="1190143"/>
<dbReference type="KEGG" id="vpa:VP2619"/>
<dbReference type="PATRIC" id="fig|223926.6.peg.2515"/>
<dbReference type="eggNOG" id="COG1872">
    <property type="taxonomic scope" value="Bacteria"/>
</dbReference>
<dbReference type="HOGENOM" id="CLU_130694_5_0_6"/>
<dbReference type="Proteomes" id="UP000002493">
    <property type="component" value="Chromosome 1"/>
</dbReference>
<dbReference type="GO" id="GO:0005737">
    <property type="term" value="C:cytoplasm"/>
    <property type="evidence" value="ECO:0007669"/>
    <property type="project" value="TreeGrafter"/>
</dbReference>
<dbReference type="Gene3D" id="3.30.1200.10">
    <property type="entry name" value="YggU-like"/>
    <property type="match status" value="1"/>
</dbReference>
<dbReference type="HAMAP" id="MF_00634">
    <property type="entry name" value="UPF0235"/>
    <property type="match status" value="1"/>
</dbReference>
<dbReference type="InterPro" id="IPR003746">
    <property type="entry name" value="DUF167"/>
</dbReference>
<dbReference type="InterPro" id="IPR036591">
    <property type="entry name" value="YggU-like_sf"/>
</dbReference>
<dbReference type="NCBIfam" id="TIGR00251">
    <property type="entry name" value="DUF167 family protein"/>
    <property type="match status" value="1"/>
</dbReference>
<dbReference type="NCBIfam" id="NF003466">
    <property type="entry name" value="PRK05090.1"/>
    <property type="match status" value="1"/>
</dbReference>
<dbReference type="PANTHER" id="PTHR13420">
    <property type="entry name" value="UPF0235 PROTEIN C15ORF40"/>
    <property type="match status" value="1"/>
</dbReference>
<dbReference type="PANTHER" id="PTHR13420:SF7">
    <property type="entry name" value="UPF0235 PROTEIN C15ORF40"/>
    <property type="match status" value="1"/>
</dbReference>
<dbReference type="Pfam" id="PF02594">
    <property type="entry name" value="DUF167"/>
    <property type="match status" value="1"/>
</dbReference>
<dbReference type="SMART" id="SM01152">
    <property type="entry name" value="DUF167"/>
    <property type="match status" value="1"/>
</dbReference>
<dbReference type="SUPFAM" id="SSF69786">
    <property type="entry name" value="YggU-like"/>
    <property type="match status" value="1"/>
</dbReference>
<sequence length="96" mass="10554">MSAAVWQDGEDIVLKLYIQPKASRDKIVGLHGEELKIAITAPPVDGKANAHLTKFLAKQFKIAKGLVHIEKGELGRHKQIRIESPVQIPAEVKAIL</sequence>
<protein>
    <recommendedName>
        <fullName evidence="1">UPF0235 protein VP2619</fullName>
    </recommendedName>
</protein>